<feature type="chain" id="PRO_0000077643" description="Anti-RecBCD protein 2">
    <location>
        <begin position="1"/>
        <end position="97"/>
    </location>
</feature>
<feature type="strand" evidence="1">
    <location>
        <begin position="8"/>
        <end position="12"/>
    </location>
</feature>
<feature type="strand" evidence="1">
    <location>
        <begin position="16"/>
        <end position="18"/>
    </location>
</feature>
<feature type="helix" evidence="1">
    <location>
        <begin position="19"/>
        <end position="28"/>
    </location>
</feature>
<feature type="helix" evidence="1">
    <location>
        <begin position="30"/>
        <end position="35"/>
    </location>
</feature>
<feature type="helix" evidence="1">
    <location>
        <begin position="41"/>
        <end position="51"/>
    </location>
</feature>
<name>ABC2_BPP22</name>
<comment type="function">
    <text>Modulates the activity of the host recBCD nuclease. And thus protects linear double-stranded DNA from exonuclease degradation.</text>
</comment>
<protein>
    <recommendedName>
        <fullName>Anti-RecBCD protein 2</fullName>
        <shortName>Protein abc2</shortName>
    </recommendedName>
</protein>
<organism>
    <name type="scientific">Salmonella phage P22</name>
    <name type="common">Bacteriophage P22</name>
    <dbReference type="NCBI Taxonomy" id="10754"/>
    <lineage>
        <taxon>Viruses</taxon>
        <taxon>Duplodnaviria</taxon>
        <taxon>Heunggongvirae</taxon>
        <taxon>Uroviricota</taxon>
        <taxon>Caudoviricetes</taxon>
        <taxon>Lederbergvirus</taxon>
    </lineage>
</organism>
<gene>
    <name type="primary">abc2</name>
</gene>
<organismHost>
    <name type="scientific">Salmonella typhimurium</name>
    <dbReference type="NCBI Taxonomy" id="90371"/>
</organismHost>
<evidence type="ECO:0007829" key="1">
    <source>
        <dbReference type="PDB" id="8B1T"/>
    </source>
</evidence>
<keyword id="KW-0002">3D-structure</keyword>
<keyword id="KW-1185">Reference proteome</keyword>
<reference key="1">
    <citation type="journal article" date="1987" name="Virology">
        <title>Sequence of the bacteriophage P22 anti-recBCD (abc) genes and properties of P22 abc region deletion mutants.</title>
        <authorList>
            <person name="Murphy K.C."/>
            <person name="Fenton A.C."/>
            <person name="Poteete A.R."/>
        </authorList>
    </citation>
    <scope>NUCLEOTIDE SEQUENCE [GENOMIC DNA]</scope>
</reference>
<reference key="2">
    <citation type="journal article" date="2000" name="J. Bacteriol.">
        <title>Sequence of the genome of Salmonella bacteriophage P22.</title>
        <authorList>
            <person name="Vander Byl C.S."/>
            <person name="Kropinski A.M.B."/>
        </authorList>
    </citation>
    <scope>NUCLEOTIDE SEQUENCE [LARGE SCALE GENOMIC DNA]</scope>
</reference>
<reference key="3">
    <citation type="journal article" date="2003" name="J. Bacteriol.">
        <title>Corrected sequence of the bacteriophage P22 genome.</title>
        <authorList>
            <person name="Pedulla M.L."/>
            <person name="Ford M.E."/>
            <person name="Karthikeyan T."/>
            <person name="Houtz J.M."/>
            <person name="Hendrix R.W."/>
            <person name="Hatfull G.F."/>
            <person name="Poteete A.R."/>
            <person name="Gilcrease E.B."/>
            <person name="Winn-Stapley D.A."/>
            <person name="Casjens S.R."/>
        </authorList>
    </citation>
    <scope>NUCLEOTIDE SEQUENCE [LARGE SCALE GENOMIC DNA]</scope>
</reference>
<sequence length="97" mass="11620">MPAPLYGADDPRRCSGNSVSEVLDKFRKNYDLIMSLPQETKEEKEFRHCIWLAEKEERERIYQTAIRPFRKATYTKFIEIDPRLRDYRSRYGAISNN</sequence>
<proteinExistence type="evidence at protein level"/>
<dbReference type="EMBL" id="J02471">
    <property type="protein sequence ID" value="AAA88345.1"/>
    <property type="molecule type" value="Genomic_DNA"/>
</dbReference>
<dbReference type="EMBL" id="AF217253">
    <property type="protein sequence ID" value="AAF75012.1"/>
    <property type="molecule type" value="Genomic_DNA"/>
</dbReference>
<dbReference type="EMBL" id="BK000583">
    <property type="protein sequence ID" value="DAA01009.1"/>
    <property type="molecule type" value="Genomic_DNA"/>
</dbReference>
<dbReference type="PIR" id="B27841">
    <property type="entry name" value="RCBP22"/>
</dbReference>
<dbReference type="RefSeq" id="NP_059594.1">
    <property type="nucleotide sequence ID" value="NC_002371.2"/>
</dbReference>
<dbReference type="PDB" id="8B1T">
    <property type="method" value="EM"/>
    <property type="resolution" value="3.40 A"/>
    <property type="chains" value="A=1-97"/>
</dbReference>
<dbReference type="PDB" id="8B1U">
    <property type="method" value="EM"/>
    <property type="resolution" value="3.80 A"/>
    <property type="chains" value="A=1-97"/>
</dbReference>
<dbReference type="PDBsum" id="8B1T"/>
<dbReference type="PDBsum" id="8B1U"/>
<dbReference type="EMDB" id="EMD-15804"/>
<dbReference type="EMDB" id="EMD-15805"/>
<dbReference type="SMR" id="P11191"/>
<dbReference type="DIP" id="DIP-583N"/>
<dbReference type="GeneID" id="1262804"/>
<dbReference type="KEGG" id="vg:1262804"/>
<dbReference type="OrthoDB" id="17629at10239"/>
<dbReference type="Proteomes" id="UP000001795">
    <property type="component" value="Segment"/>
</dbReference>
<dbReference type="Proteomes" id="UP000007960">
    <property type="component" value="Segment"/>
</dbReference>
<dbReference type="InterPro" id="IPR020500">
    <property type="entry name" value="Phage_P22_anti-RecBCD_p2"/>
</dbReference>
<dbReference type="Pfam" id="PF11043">
    <property type="entry name" value="Anti-RecBCD_p2"/>
    <property type="match status" value="1"/>
</dbReference>
<accession>P11191</accession>
<accession>Q7PCG4</accession>